<feature type="chain" id="PRO_0000353192" description="Protein ilm1">
    <location>
        <begin position="1"/>
        <end position="161"/>
    </location>
</feature>
<feature type="topological domain" description="Cytoplasmic" evidence="2">
    <location>
        <begin position="1"/>
        <end position="6"/>
    </location>
</feature>
<feature type="transmembrane region" description="Helical" evidence="2">
    <location>
        <begin position="7"/>
        <end position="27"/>
    </location>
</feature>
<feature type="topological domain" description="Lumenal" evidence="2">
    <location>
        <begin position="28"/>
        <end position="56"/>
    </location>
</feature>
<feature type="transmembrane region" description="Helical" evidence="2">
    <location>
        <begin position="57"/>
        <end position="77"/>
    </location>
</feature>
<feature type="topological domain" description="Cytoplasmic" evidence="2">
    <location>
        <begin position="78"/>
        <end position="81"/>
    </location>
</feature>
<feature type="transmembrane region" description="Helical" evidence="2">
    <location>
        <begin position="82"/>
        <end position="102"/>
    </location>
</feature>
<feature type="topological domain" description="Lumenal" evidence="2">
    <location>
        <begin position="103"/>
        <end position="112"/>
    </location>
</feature>
<feature type="transmembrane region" description="Helical" evidence="2">
    <location>
        <begin position="113"/>
        <end position="133"/>
    </location>
</feature>
<feature type="topological domain" description="Cytoplasmic" evidence="2">
    <location>
        <begin position="134"/>
        <end position="161"/>
    </location>
</feature>
<evidence type="ECO:0000250" key="1">
    <source>
        <dbReference type="UniProtKB" id="P47155"/>
    </source>
</evidence>
<evidence type="ECO:0000255" key="2"/>
<evidence type="ECO:0000269" key="3">
    <source>
    </source>
</evidence>
<evidence type="ECO:0000305" key="4"/>
<evidence type="ECO:0000312" key="5">
    <source>
        <dbReference type="EMBL" id="CAB76264.1"/>
    </source>
</evidence>
<sequence length="161" mass="18319">MLFSFRAIVLFYCCMLTFAGIGFLWNPKFVVESGLVALIGASMEVKPLIVTQDNLSTLALSGLVFLILGMIYTISLLQSNFLFFSGITPIRAIFDFILTGFIYLKKEHIASNSLTFTFAFCDLMWQFWMFAAMSEERAKYLKNQKKAEELAARKAREVEES</sequence>
<gene>
    <name evidence="1" type="primary">ilm1</name>
    <name type="ORF">SPAC1782.02c</name>
</gene>
<proteinExistence type="inferred from homology"/>
<protein>
    <recommendedName>
        <fullName evidence="1">Protein ilm1</fullName>
    </recommendedName>
</protein>
<reference evidence="5" key="1">
    <citation type="journal article" date="2002" name="Nature">
        <title>The genome sequence of Schizosaccharomyces pombe.</title>
        <authorList>
            <person name="Wood V."/>
            <person name="Gwilliam R."/>
            <person name="Rajandream M.A."/>
            <person name="Lyne M.H."/>
            <person name="Lyne R."/>
            <person name="Stewart A."/>
            <person name="Sgouros J.G."/>
            <person name="Peat N."/>
            <person name="Hayles J."/>
            <person name="Baker S.G."/>
            <person name="Basham D."/>
            <person name="Bowman S."/>
            <person name="Brooks K."/>
            <person name="Brown D."/>
            <person name="Brown S."/>
            <person name="Chillingworth T."/>
            <person name="Churcher C.M."/>
            <person name="Collins M."/>
            <person name="Connor R."/>
            <person name="Cronin A."/>
            <person name="Davis P."/>
            <person name="Feltwell T."/>
            <person name="Fraser A."/>
            <person name="Gentles S."/>
            <person name="Goble A."/>
            <person name="Hamlin N."/>
            <person name="Harris D.E."/>
            <person name="Hidalgo J."/>
            <person name="Hodgson G."/>
            <person name="Holroyd S."/>
            <person name="Hornsby T."/>
            <person name="Howarth S."/>
            <person name="Huckle E.J."/>
            <person name="Hunt S."/>
            <person name="Jagels K."/>
            <person name="James K.D."/>
            <person name="Jones L."/>
            <person name="Jones M."/>
            <person name="Leather S."/>
            <person name="McDonald S."/>
            <person name="McLean J."/>
            <person name="Mooney P."/>
            <person name="Moule S."/>
            <person name="Mungall K.L."/>
            <person name="Murphy L.D."/>
            <person name="Niblett D."/>
            <person name="Odell C."/>
            <person name="Oliver K."/>
            <person name="O'Neil S."/>
            <person name="Pearson D."/>
            <person name="Quail M.A."/>
            <person name="Rabbinowitsch E."/>
            <person name="Rutherford K.M."/>
            <person name="Rutter S."/>
            <person name="Saunders D."/>
            <person name="Seeger K."/>
            <person name="Sharp S."/>
            <person name="Skelton J."/>
            <person name="Simmonds M.N."/>
            <person name="Squares R."/>
            <person name="Squares S."/>
            <person name="Stevens K."/>
            <person name="Taylor K."/>
            <person name="Taylor R.G."/>
            <person name="Tivey A."/>
            <person name="Walsh S.V."/>
            <person name="Warren T."/>
            <person name="Whitehead S."/>
            <person name="Woodward J.R."/>
            <person name="Volckaert G."/>
            <person name="Aert R."/>
            <person name="Robben J."/>
            <person name="Grymonprez B."/>
            <person name="Weltjens I."/>
            <person name="Vanstreels E."/>
            <person name="Rieger M."/>
            <person name="Schaefer M."/>
            <person name="Mueller-Auer S."/>
            <person name="Gabel C."/>
            <person name="Fuchs M."/>
            <person name="Duesterhoeft A."/>
            <person name="Fritzc C."/>
            <person name="Holzer E."/>
            <person name="Moestl D."/>
            <person name="Hilbert H."/>
            <person name="Borzym K."/>
            <person name="Langer I."/>
            <person name="Beck A."/>
            <person name="Lehrach H."/>
            <person name="Reinhardt R."/>
            <person name="Pohl T.M."/>
            <person name="Eger P."/>
            <person name="Zimmermann W."/>
            <person name="Wedler H."/>
            <person name="Wambutt R."/>
            <person name="Purnelle B."/>
            <person name="Goffeau A."/>
            <person name="Cadieu E."/>
            <person name="Dreano S."/>
            <person name="Gloux S."/>
            <person name="Lelaure V."/>
            <person name="Mottier S."/>
            <person name="Galibert F."/>
            <person name="Aves S.J."/>
            <person name="Xiang Z."/>
            <person name="Hunt C."/>
            <person name="Moore K."/>
            <person name="Hurst S.M."/>
            <person name="Lucas M."/>
            <person name="Rochet M."/>
            <person name="Gaillardin C."/>
            <person name="Tallada V.A."/>
            <person name="Garzon A."/>
            <person name="Thode G."/>
            <person name="Daga R.R."/>
            <person name="Cruzado L."/>
            <person name="Jimenez J."/>
            <person name="Sanchez M."/>
            <person name="del Rey F."/>
            <person name="Benito J."/>
            <person name="Dominguez A."/>
            <person name="Revuelta J.L."/>
            <person name="Moreno S."/>
            <person name="Armstrong J."/>
            <person name="Forsburg S.L."/>
            <person name="Cerutti L."/>
            <person name="Lowe T."/>
            <person name="McCombie W.R."/>
            <person name="Paulsen I."/>
            <person name="Potashkin J."/>
            <person name="Shpakovski G.V."/>
            <person name="Ussery D."/>
            <person name="Barrell B.G."/>
            <person name="Nurse P."/>
        </authorList>
    </citation>
    <scope>NUCLEOTIDE SEQUENCE [LARGE SCALE GENOMIC DNA]</scope>
    <source>
        <strain>972 / ATCC 24843</strain>
    </source>
</reference>
<reference evidence="4" key="2">
    <citation type="journal article" date="2006" name="Nat. Biotechnol.">
        <title>ORFeome cloning and global analysis of protein localization in the fission yeast Schizosaccharomyces pombe.</title>
        <authorList>
            <person name="Matsuyama A."/>
            <person name="Arai R."/>
            <person name="Yashiroda Y."/>
            <person name="Shirai A."/>
            <person name="Kamata A."/>
            <person name="Sekido S."/>
            <person name="Kobayashi Y."/>
            <person name="Hashimoto A."/>
            <person name="Hamamoto M."/>
            <person name="Hiraoka Y."/>
            <person name="Horinouchi S."/>
            <person name="Yoshida M."/>
        </authorList>
    </citation>
    <scope>SUBCELLULAR LOCATION [LARGE SCALE ANALYSIS]</scope>
</reference>
<name>ILM1_SCHPO</name>
<dbReference type="EMBL" id="CU329670">
    <property type="protein sequence ID" value="CAB76264.1"/>
    <property type="molecule type" value="Genomic_DNA"/>
</dbReference>
<dbReference type="PIR" id="T50092">
    <property type="entry name" value="T50092"/>
</dbReference>
<dbReference type="RefSeq" id="NP_594709.1">
    <property type="nucleotide sequence ID" value="NM_001020136.2"/>
</dbReference>
<dbReference type="SMR" id="Q9P7H7"/>
<dbReference type="BioGRID" id="278817">
    <property type="interactions" value="5"/>
</dbReference>
<dbReference type="FunCoup" id="Q9P7H7">
    <property type="interactions" value="17"/>
</dbReference>
<dbReference type="iPTMnet" id="Q9P7H7"/>
<dbReference type="PaxDb" id="4896-SPAC1782.02c.1"/>
<dbReference type="EnsemblFungi" id="SPAC1782.02c.1">
    <property type="protein sequence ID" value="SPAC1782.02c.1:pep"/>
    <property type="gene ID" value="SPAC1782.02c"/>
</dbReference>
<dbReference type="KEGG" id="spo:2542352"/>
<dbReference type="PomBase" id="SPAC1782.02c"/>
<dbReference type="VEuPathDB" id="FungiDB:SPAC1782.02c"/>
<dbReference type="eggNOG" id="ENOG502SFVW">
    <property type="taxonomic scope" value="Eukaryota"/>
</dbReference>
<dbReference type="HOGENOM" id="CLU_1670409_0_0_1"/>
<dbReference type="InParanoid" id="Q9P7H7"/>
<dbReference type="OMA" id="CDLMWQF"/>
<dbReference type="PhylomeDB" id="Q9P7H7"/>
<dbReference type="PRO" id="PR:Q9P7H7"/>
<dbReference type="Proteomes" id="UP000002485">
    <property type="component" value="Chromosome I"/>
</dbReference>
<dbReference type="GO" id="GO:0005783">
    <property type="term" value="C:endoplasmic reticulum"/>
    <property type="evidence" value="ECO:0007005"/>
    <property type="project" value="PomBase"/>
</dbReference>
<dbReference type="GO" id="GO:0016020">
    <property type="term" value="C:membrane"/>
    <property type="evidence" value="ECO:0007669"/>
    <property type="project" value="UniProtKB-SubCell"/>
</dbReference>
<dbReference type="InterPro" id="IPR018815">
    <property type="entry name" value="Incr_loss_mito_DNA_1"/>
</dbReference>
<dbReference type="PANTHER" id="PTHR28029">
    <property type="entry name" value="PROTEIN ILM1"/>
    <property type="match status" value="1"/>
</dbReference>
<dbReference type="PANTHER" id="PTHR28029:SF1">
    <property type="entry name" value="PROTEIN ILM1"/>
    <property type="match status" value="1"/>
</dbReference>
<dbReference type="Pfam" id="PF10311">
    <property type="entry name" value="Ilm1"/>
    <property type="match status" value="1"/>
</dbReference>
<comment type="subcellular location">
    <subcellularLocation>
        <location evidence="3">Endoplasmic reticulum</location>
    </subcellularLocation>
    <subcellularLocation>
        <location evidence="2">Membrane</location>
        <topology evidence="2">Multi-pass membrane protein</topology>
    </subcellularLocation>
</comment>
<comment type="similarity">
    <text evidence="4">Belongs to the ILM1 family.</text>
</comment>
<accession>Q9P7H7</accession>
<organism>
    <name type="scientific">Schizosaccharomyces pombe (strain 972 / ATCC 24843)</name>
    <name type="common">Fission yeast</name>
    <dbReference type="NCBI Taxonomy" id="284812"/>
    <lineage>
        <taxon>Eukaryota</taxon>
        <taxon>Fungi</taxon>
        <taxon>Dikarya</taxon>
        <taxon>Ascomycota</taxon>
        <taxon>Taphrinomycotina</taxon>
        <taxon>Schizosaccharomycetes</taxon>
        <taxon>Schizosaccharomycetales</taxon>
        <taxon>Schizosaccharomycetaceae</taxon>
        <taxon>Schizosaccharomyces</taxon>
    </lineage>
</organism>
<keyword id="KW-0256">Endoplasmic reticulum</keyword>
<keyword id="KW-0472">Membrane</keyword>
<keyword id="KW-1185">Reference proteome</keyword>
<keyword id="KW-0812">Transmembrane</keyword>
<keyword id="KW-1133">Transmembrane helix</keyword>